<organism>
    <name type="scientific">Serratia proteamaculans (strain 568)</name>
    <dbReference type="NCBI Taxonomy" id="399741"/>
    <lineage>
        <taxon>Bacteria</taxon>
        <taxon>Pseudomonadati</taxon>
        <taxon>Pseudomonadota</taxon>
        <taxon>Gammaproteobacteria</taxon>
        <taxon>Enterobacterales</taxon>
        <taxon>Yersiniaceae</taxon>
        <taxon>Serratia</taxon>
    </lineage>
</organism>
<accession>A8GJU8</accession>
<proteinExistence type="inferred from homology"/>
<reference key="1">
    <citation type="submission" date="2007-09" db="EMBL/GenBank/DDBJ databases">
        <title>Complete sequence of chromosome of Serratia proteamaculans 568.</title>
        <authorList>
            <consortium name="US DOE Joint Genome Institute"/>
            <person name="Copeland A."/>
            <person name="Lucas S."/>
            <person name="Lapidus A."/>
            <person name="Barry K."/>
            <person name="Glavina del Rio T."/>
            <person name="Dalin E."/>
            <person name="Tice H."/>
            <person name="Pitluck S."/>
            <person name="Chain P."/>
            <person name="Malfatti S."/>
            <person name="Shin M."/>
            <person name="Vergez L."/>
            <person name="Schmutz J."/>
            <person name="Larimer F."/>
            <person name="Land M."/>
            <person name="Hauser L."/>
            <person name="Kyrpides N."/>
            <person name="Kim E."/>
            <person name="Taghavi S."/>
            <person name="Newman L."/>
            <person name="Vangronsveld J."/>
            <person name="van der Lelie D."/>
            <person name="Richardson P."/>
        </authorList>
    </citation>
    <scope>NUCLEOTIDE SEQUENCE [LARGE SCALE GENOMIC DNA]</scope>
    <source>
        <strain>568</strain>
    </source>
</reference>
<name>UPPP_SERP5</name>
<feature type="chain" id="PRO_1000062811" description="Undecaprenyl-diphosphatase">
    <location>
        <begin position="1"/>
        <end position="274"/>
    </location>
</feature>
<feature type="transmembrane region" description="Helical" evidence="1">
    <location>
        <begin position="6"/>
        <end position="26"/>
    </location>
</feature>
<feature type="transmembrane region" description="Helical" evidence="1">
    <location>
        <begin position="45"/>
        <end position="65"/>
    </location>
</feature>
<feature type="transmembrane region" description="Helical" evidence="1">
    <location>
        <begin position="94"/>
        <end position="114"/>
    </location>
</feature>
<feature type="transmembrane region" description="Helical" evidence="1">
    <location>
        <begin position="117"/>
        <end position="137"/>
    </location>
</feature>
<feature type="transmembrane region" description="Helical" evidence="1">
    <location>
        <begin position="155"/>
        <end position="174"/>
    </location>
</feature>
<feature type="transmembrane region" description="Helical" evidence="1">
    <location>
        <begin position="191"/>
        <end position="211"/>
    </location>
</feature>
<feature type="transmembrane region" description="Helical" evidence="1">
    <location>
        <begin position="223"/>
        <end position="243"/>
    </location>
</feature>
<feature type="transmembrane region" description="Helical" evidence="1">
    <location>
        <begin position="253"/>
        <end position="273"/>
    </location>
</feature>
<protein>
    <recommendedName>
        <fullName evidence="1">Undecaprenyl-diphosphatase</fullName>
        <ecNumber evidence="1">3.6.1.27</ecNumber>
    </recommendedName>
    <alternativeName>
        <fullName evidence="1">Bacitracin resistance protein</fullName>
    </alternativeName>
    <alternativeName>
        <fullName evidence="1">Undecaprenyl pyrophosphate phosphatase</fullName>
    </alternativeName>
</protein>
<sequence>MADMHSLFIAFVLGVVEGLTEFLPVSSTGHMIIVGEWLGFTGDKAKTFEVIIQLGSILAVVVMFWRRLFGLIGIHFGGKPVEHEGKTTGHLKLGHILLAMIPAVVLGLLFHDVIKSLFAPKNVMYALVVGGFLLLAAEWLKPKKPSAEGLDDITYRQAFMIGCFQCLALWPGFSRSGSTIAGGMLVGVNRYAAAEFSFILAVPMMIGASGLDLYKSLHFLTMGDLPMFAVGFATAFVVALIAIKTFLTLIKRISFVPFAIYRFIVAGVVYMVFM</sequence>
<evidence type="ECO:0000255" key="1">
    <source>
        <dbReference type="HAMAP-Rule" id="MF_01006"/>
    </source>
</evidence>
<comment type="function">
    <text evidence="1">Catalyzes the dephosphorylation of undecaprenyl diphosphate (UPP). Confers resistance to bacitracin.</text>
</comment>
<comment type="catalytic activity">
    <reaction evidence="1">
        <text>di-trans,octa-cis-undecaprenyl diphosphate + H2O = di-trans,octa-cis-undecaprenyl phosphate + phosphate + H(+)</text>
        <dbReference type="Rhea" id="RHEA:28094"/>
        <dbReference type="ChEBI" id="CHEBI:15377"/>
        <dbReference type="ChEBI" id="CHEBI:15378"/>
        <dbReference type="ChEBI" id="CHEBI:43474"/>
        <dbReference type="ChEBI" id="CHEBI:58405"/>
        <dbReference type="ChEBI" id="CHEBI:60392"/>
        <dbReference type="EC" id="3.6.1.27"/>
    </reaction>
</comment>
<comment type="subcellular location">
    <subcellularLocation>
        <location evidence="1">Cell inner membrane</location>
        <topology evidence="1">Multi-pass membrane protein</topology>
    </subcellularLocation>
</comment>
<comment type="miscellaneous">
    <text>Bacitracin is thought to be involved in the inhibition of peptidoglycan synthesis by sequestering undecaprenyl diphosphate, thereby reducing the pool of lipid carrier available.</text>
</comment>
<comment type="similarity">
    <text evidence="1">Belongs to the UppP family.</text>
</comment>
<gene>
    <name evidence="1" type="primary">uppP</name>
    <name type="ordered locus">Spro_4294</name>
</gene>
<dbReference type="EC" id="3.6.1.27" evidence="1"/>
<dbReference type="EMBL" id="CP000826">
    <property type="protein sequence ID" value="ABV43388.1"/>
    <property type="molecule type" value="Genomic_DNA"/>
</dbReference>
<dbReference type="SMR" id="A8GJU8"/>
<dbReference type="STRING" id="399741.Spro_4294"/>
<dbReference type="KEGG" id="spe:Spro_4294"/>
<dbReference type="eggNOG" id="COG1968">
    <property type="taxonomic scope" value="Bacteria"/>
</dbReference>
<dbReference type="HOGENOM" id="CLU_060296_2_0_6"/>
<dbReference type="OrthoDB" id="9808289at2"/>
<dbReference type="GO" id="GO:0005886">
    <property type="term" value="C:plasma membrane"/>
    <property type="evidence" value="ECO:0007669"/>
    <property type="project" value="UniProtKB-SubCell"/>
</dbReference>
<dbReference type="GO" id="GO:0050380">
    <property type="term" value="F:undecaprenyl-diphosphatase activity"/>
    <property type="evidence" value="ECO:0007669"/>
    <property type="project" value="UniProtKB-UniRule"/>
</dbReference>
<dbReference type="GO" id="GO:0071555">
    <property type="term" value="P:cell wall organization"/>
    <property type="evidence" value="ECO:0007669"/>
    <property type="project" value="UniProtKB-KW"/>
</dbReference>
<dbReference type="GO" id="GO:0009252">
    <property type="term" value="P:peptidoglycan biosynthetic process"/>
    <property type="evidence" value="ECO:0007669"/>
    <property type="project" value="UniProtKB-KW"/>
</dbReference>
<dbReference type="GO" id="GO:0008360">
    <property type="term" value="P:regulation of cell shape"/>
    <property type="evidence" value="ECO:0007669"/>
    <property type="project" value="UniProtKB-KW"/>
</dbReference>
<dbReference type="GO" id="GO:0046677">
    <property type="term" value="P:response to antibiotic"/>
    <property type="evidence" value="ECO:0007669"/>
    <property type="project" value="UniProtKB-UniRule"/>
</dbReference>
<dbReference type="HAMAP" id="MF_01006">
    <property type="entry name" value="Undec_diphosphatase"/>
    <property type="match status" value="1"/>
</dbReference>
<dbReference type="InterPro" id="IPR003824">
    <property type="entry name" value="UppP"/>
</dbReference>
<dbReference type="NCBIfam" id="NF001388">
    <property type="entry name" value="PRK00281.1-1"/>
    <property type="match status" value="1"/>
</dbReference>
<dbReference type="NCBIfam" id="NF001389">
    <property type="entry name" value="PRK00281.1-2"/>
    <property type="match status" value="1"/>
</dbReference>
<dbReference type="NCBIfam" id="NF001390">
    <property type="entry name" value="PRK00281.1-4"/>
    <property type="match status" value="1"/>
</dbReference>
<dbReference type="NCBIfam" id="TIGR00753">
    <property type="entry name" value="undec_PP_bacA"/>
    <property type="match status" value="1"/>
</dbReference>
<dbReference type="PANTHER" id="PTHR30622">
    <property type="entry name" value="UNDECAPRENYL-DIPHOSPHATASE"/>
    <property type="match status" value="1"/>
</dbReference>
<dbReference type="PANTHER" id="PTHR30622:SF3">
    <property type="entry name" value="UNDECAPRENYL-DIPHOSPHATASE"/>
    <property type="match status" value="1"/>
</dbReference>
<dbReference type="Pfam" id="PF02673">
    <property type="entry name" value="BacA"/>
    <property type="match status" value="1"/>
</dbReference>
<keyword id="KW-0046">Antibiotic resistance</keyword>
<keyword id="KW-0997">Cell inner membrane</keyword>
<keyword id="KW-1003">Cell membrane</keyword>
<keyword id="KW-0133">Cell shape</keyword>
<keyword id="KW-0961">Cell wall biogenesis/degradation</keyword>
<keyword id="KW-0378">Hydrolase</keyword>
<keyword id="KW-0472">Membrane</keyword>
<keyword id="KW-0573">Peptidoglycan synthesis</keyword>
<keyword id="KW-0812">Transmembrane</keyword>
<keyword id="KW-1133">Transmembrane helix</keyword>